<comment type="function">
    <text evidence="1">Exporter of leucine.</text>
</comment>
<comment type="catalytic activity">
    <reaction evidence="1">
        <text>L-leucine(in) + H(+)(out) = L-leucine(out) + H(+)(in)</text>
        <dbReference type="Rhea" id="RHEA:28731"/>
        <dbReference type="ChEBI" id="CHEBI:15378"/>
        <dbReference type="ChEBI" id="CHEBI:57427"/>
    </reaction>
    <physiologicalReaction direction="left-to-right" evidence="1">
        <dbReference type="Rhea" id="RHEA:28732"/>
    </physiologicalReaction>
</comment>
<comment type="subcellular location">
    <subcellularLocation>
        <location evidence="1">Cell inner membrane</location>
        <topology evidence="2">Multi-pass membrane protein</topology>
    </subcellularLocation>
</comment>
<comment type="similarity">
    <text evidence="3">Belongs to the Rht family.</text>
</comment>
<gene>
    <name type="primary">leuE</name>
    <name type="ordered locus">SPA1576</name>
</gene>
<protein>
    <recommendedName>
        <fullName evidence="1">Leucine efflux protein</fullName>
    </recommendedName>
</protein>
<accession>Q5PHF4</accession>
<feature type="chain" id="PRO_0000316807" description="Leucine efflux protein">
    <location>
        <begin position="1"/>
        <end position="212"/>
    </location>
</feature>
<feature type="transmembrane region" description="Helical" evidence="2">
    <location>
        <begin position="12"/>
        <end position="32"/>
    </location>
</feature>
<feature type="transmembrane region" description="Helical" evidence="2">
    <location>
        <begin position="49"/>
        <end position="69"/>
    </location>
</feature>
<feature type="transmembrane region" description="Helical" evidence="2">
    <location>
        <begin position="81"/>
        <end position="101"/>
    </location>
</feature>
<feature type="transmembrane region" description="Helical" evidence="2">
    <location>
        <begin position="120"/>
        <end position="142"/>
    </location>
</feature>
<feature type="transmembrane region" description="Helical" evidence="2">
    <location>
        <begin position="153"/>
        <end position="173"/>
    </location>
</feature>
<feature type="transmembrane region" description="Helical" evidence="2">
    <location>
        <begin position="188"/>
        <end position="208"/>
    </location>
</feature>
<organism>
    <name type="scientific">Salmonella paratyphi A (strain ATCC 9150 / SARB42)</name>
    <dbReference type="NCBI Taxonomy" id="295319"/>
    <lineage>
        <taxon>Bacteria</taxon>
        <taxon>Pseudomonadati</taxon>
        <taxon>Pseudomonadota</taxon>
        <taxon>Gammaproteobacteria</taxon>
        <taxon>Enterobacterales</taxon>
        <taxon>Enterobacteriaceae</taxon>
        <taxon>Salmonella</taxon>
    </lineage>
</organism>
<evidence type="ECO:0000250" key="1">
    <source>
        <dbReference type="UniProtKB" id="P76249"/>
    </source>
</evidence>
<evidence type="ECO:0000255" key="2"/>
<evidence type="ECO:0000305" key="3"/>
<keyword id="KW-0029">Amino-acid transport</keyword>
<keyword id="KW-0050">Antiport</keyword>
<keyword id="KW-0997">Cell inner membrane</keyword>
<keyword id="KW-1003">Cell membrane</keyword>
<keyword id="KW-0472">Membrane</keyword>
<keyword id="KW-0812">Transmembrane</keyword>
<keyword id="KW-1133">Transmembrane helix</keyword>
<keyword id="KW-0813">Transport</keyword>
<name>LEUE_SALPA</name>
<dbReference type="EMBL" id="CP000026">
    <property type="protein sequence ID" value="AAV77507.1"/>
    <property type="molecule type" value="Genomic_DNA"/>
</dbReference>
<dbReference type="RefSeq" id="WP_000457190.1">
    <property type="nucleotide sequence ID" value="NC_006511.1"/>
</dbReference>
<dbReference type="KEGG" id="spt:SPA1576"/>
<dbReference type="HOGENOM" id="CLU_079569_3_1_6"/>
<dbReference type="Proteomes" id="UP000008185">
    <property type="component" value="Chromosome"/>
</dbReference>
<dbReference type="GO" id="GO:0005886">
    <property type="term" value="C:plasma membrane"/>
    <property type="evidence" value="ECO:0007669"/>
    <property type="project" value="UniProtKB-SubCell"/>
</dbReference>
<dbReference type="GO" id="GO:0015297">
    <property type="term" value="F:antiporter activity"/>
    <property type="evidence" value="ECO:0007669"/>
    <property type="project" value="UniProtKB-KW"/>
</dbReference>
<dbReference type="GO" id="GO:0015190">
    <property type="term" value="F:L-leucine transmembrane transporter activity"/>
    <property type="evidence" value="ECO:0007669"/>
    <property type="project" value="TreeGrafter"/>
</dbReference>
<dbReference type="GO" id="GO:0015820">
    <property type="term" value="P:L-leucine transport"/>
    <property type="evidence" value="ECO:0007669"/>
    <property type="project" value="TreeGrafter"/>
</dbReference>
<dbReference type="InterPro" id="IPR001123">
    <property type="entry name" value="LeuE-type"/>
</dbReference>
<dbReference type="NCBIfam" id="NF008201">
    <property type="entry name" value="PRK10958.1"/>
    <property type="match status" value="1"/>
</dbReference>
<dbReference type="PANTHER" id="PTHR30086">
    <property type="entry name" value="ARGININE EXPORTER PROTEIN ARGO"/>
    <property type="match status" value="1"/>
</dbReference>
<dbReference type="PANTHER" id="PTHR30086:SF15">
    <property type="entry name" value="LEUCINE EFFLUX PROTEIN"/>
    <property type="match status" value="1"/>
</dbReference>
<dbReference type="Pfam" id="PF01810">
    <property type="entry name" value="LysE"/>
    <property type="match status" value="1"/>
</dbReference>
<dbReference type="PIRSF" id="PIRSF006324">
    <property type="entry name" value="LeuE"/>
    <property type="match status" value="1"/>
</dbReference>
<sequence length="212" mass="22946">MFAEYGVLNYWTYLVGAIFIVLVPGPNTLFVLKNSVGRGVKGGYLAACGVFIGDAILMFLAYAGVATLIKTTPVLFNIVRYLGAFYLLYLGAKILYATLTSKGRAATETVVPFGAIFKRALILSLTNPKAILFYVSFFVQFIDVTAPHTGVSFFILATTLEIVSFCYLSFLILSGAFVTHYIGTKKKLAKVGNSLIGLLFVGFAARLATLQS</sequence>
<proteinExistence type="inferred from homology"/>
<reference key="1">
    <citation type="journal article" date="2004" name="Nat. Genet.">
        <title>Comparison of genome degradation in Paratyphi A and Typhi, human-restricted serovars of Salmonella enterica that cause typhoid.</title>
        <authorList>
            <person name="McClelland M."/>
            <person name="Sanderson K.E."/>
            <person name="Clifton S.W."/>
            <person name="Latreille P."/>
            <person name="Porwollik S."/>
            <person name="Sabo A."/>
            <person name="Meyer R."/>
            <person name="Bieri T."/>
            <person name="Ozersky P."/>
            <person name="McLellan M."/>
            <person name="Harkins C.R."/>
            <person name="Wang C."/>
            <person name="Nguyen C."/>
            <person name="Berghoff A."/>
            <person name="Elliott G."/>
            <person name="Kohlberg S."/>
            <person name="Strong C."/>
            <person name="Du F."/>
            <person name="Carter J."/>
            <person name="Kremizki C."/>
            <person name="Layman D."/>
            <person name="Leonard S."/>
            <person name="Sun H."/>
            <person name="Fulton L."/>
            <person name="Nash W."/>
            <person name="Miner T."/>
            <person name="Minx P."/>
            <person name="Delehaunty K."/>
            <person name="Fronick C."/>
            <person name="Magrini V."/>
            <person name="Nhan M."/>
            <person name="Warren W."/>
            <person name="Florea L."/>
            <person name="Spieth J."/>
            <person name="Wilson R.K."/>
        </authorList>
    </citation>
    <scope>NUCLEOTIDE SEQUENCE [LARGE SCALE GENOMIC DNA]</scope>
    <source>
        <strain>ATCC 9150 / SARB42</strain>
    </source>
</reference>